<organism>
    <name type="scientific">Streptococcus pneumoniae (strain Hungary19A-6)</name>
    <dbReference type="NCBI Taxonomy" id="487214"/>
    <lineage>
        <taxon>Bacteria</taxon>
        <taxon>Bacillati</taxon>
        <taxon>Bacillota</taxon>
        <taxon>Bacilli</taxon>
        <taxon>Lactobacillales</taxon>
        <taxon>Streptococcaceae</taxon>
        <taxon>Streptococcus</taxon>
    </lineage>
</organism>
<reference key="1">
    <citation type="journal article" date="2010" name="Genome Biol.">
        <title>Structure and dynamics of the pan-genome of Streptococcus pneumoniae and closely related species.</title>
        <authorList>
            <person name="Donati C."/>
            <person name="Hiller N.L."/>
            <person name="Tettelin H."/>
            <person name="Muzzi A."/>
            <person name="Croucher N.J."/>
            <person name="Angiuoli S.V."/>
            <person name="Oggioni M."/>
            <person name="Dunning Hotopp J.C."/>
            <person name="Hu F.Z."/>
            <person name="Riley D.R."/>
            <person name="Covacci A."/>
            <person name="Mitchell T.J."/>
            <person name="Bentley S.D."/>
            <person name="Kilian M."/>
            <person name="Ehrlich G.D."/>
            <person name="Rappuoli R."/>
            <person name="Moxon E.R."/>
            <person name="Masignani V."/>
        </authorList>
    </citation>
    <scope>NUCLEOTIDE SEQUENCE [LARGE SCALE GENOMIC DNA]</scope>
    <source>
        <strain>Hungary19A-6</strain>
    </source>
</reference>
<name>ATPL_STRPI</name>
<gene>
    <name evidence="1" type="primary">atpE</name>
    <name type="ordered locus">SPH_1625</name>
</gene>
<dbReference type="EMBL" id="CP000936">
    <property type="protein sequence ID" value="ACA37405.1"/>
    <property type="molecule type" value="Genomic_DNA"/>
</dbReference>
<dbReference type="RefSeq" id="WP_001054562.1">
    <property type="nucleotide sequence ID" value="NC_010380.1"/>
</dbReference>
<dbReference type="SMR" id="B1ICT5"/>
<dbReference type="KEGG" id="spv:SPH_1625"/>
<dbReference type="HOGENOM" id="CLU_148047_5_2_9"/>
<dbReference type="Proteomes" id="UP000002163">
    <property type="component" value="Chromosome"/>
</dbReference>
<dbReference type="GO" id="GO:0005886">
    <property type="term" value="C:plasma membrane"/>
    <property type="evidence" value="ECO:0007669"/>
    <property type="project" value="UniProtKB-SubCell"/>
</dbReference>
<dbReference type="GO" id="GO:0045259">
    <property type="term" value="C:proton-transporting ATP synthase complex"/>
    <property type="evidence" value="ECO:0007669"/>
    <property type="project" value="UniProtKB-KW"/>
</dbReference>
<dbReference type="GO" id="GO:0033177">
    <property type="term" value="C:proton-transporting two-sector ATPase complex, proton-transporting domain"/>
    <property type="evidence" value="ECO:0007669"/>
    <property type="project" value="InterPro"/>
</dbReference>
<dbReference type="GO" id="GO:0008289">
    <property type="term" value="F:lipid binding"/>
    <property type="evidence" value="ECO:0007669"/>
    <property type="project" value="UniProtKB-KW"/>
</dbReference>
<dbReference type="GO" id="GO:0046933">
    <property type="term" value="F:proton-transporting ATP synthase activity, rotational mechanism"/>
    <property type="evidence" value="ECO:0007669"/>
    <property type="project" value="UniProtKB-UniRule"/>
</dbReference>
<dbReference type="CDD" id="cd18121">
    <property type="entry name" value="ATP-synt_Fo_c"/>
    <property type="match status" value="1"/>
</dbReference>
<dbReference type="FunFam" id="1.20.20.10:FF:000017">
    <property type="entry name" value="ATP synthase subunit c"/>
    <property type="match status" value="1"/>
</dbReference>
<dbReference type="Gene3D" id="1.20.20.10">
    <property type="entry name" value="F1F0 ATP synthase subunit C"/>
    <property type="match status" value="1"/>
</dbReference>
<dbReference type="HAMAP" id="MF_01396">
    <property type="entry name" value="ATP_synth_c_bact"/>
    <property type="match status" value="1"/>
</dbReference>
<dbReference type="InterPro" id="IPR000454">
    <property type="entry name" value="ATP_synth_F0_csu"/>
</dbReference>
<dbReference type="InterPro" id="IPR020537">
    <property type="entry name" value="ATP_synth_F0_csu_DDCD_BS"/>
</dbReference>
<dbReference type="InterPro" id="IPR038662">
    <property type="entry name" value="ATP_synth_F0_csu_sf"/>
</dbReference>
<dbReference type="InterPro" id="IPR002379">
    <property type="entry name" value="ATPase_proteolipid_c-like_dom"/>
</dbReference>
<dbReference type="InterPro" id="IPR035921">
    <property type="entry name" value="F/V-ATP_Csub_sf"/>
</dbReference>
<dbReference type="NCBIfam" id="NF009997">
    <property type="entry name" value="PRK13467.1"/>
    <property type="match status" value="1"/>
</dbReference>
<dbReference type="Pfam" id="PF00137">
    <property type="entry name" value="ATP-synt_C"/>
    <property type="match status" value="1"/>
</dbReference>
<dbReference type="PRINTS" id="PR00124">
    <property type="entry name" value="ATPASEC"/>
</dbReference>
<dbReference type="SUPFAM" id="SSF81333">
    <property type="entry name" value="F1F0 ATP synthase subunit C"/>
    <property type="match status" value="1"/>
</dbReference>
<dbReference type="PROSITE" id="PS00605">
    <property type="entry name" value="ATPASE_C"/>
    <property type="match status" value="1"/>
</dbReference>
<feature type="chain" id="PRO_1000184513" description="ATP synthase subunit c">
    <location>
        <begin position="1"/>
        <end position="66"/>
    </location>
</feature>
<feature type="transmembrane region" description="Helical" evidence="1">
    <location>
        <begin position="3"/>
        <end position="23"/>
    </location>
</feature>
<feature type="transmembrane region" description="Helical" evidence="1">
    <location>
        <begin position="45"/>
        <end position="65"/>
    </location>
</feature>
<feature type="site" description="Reversibly protonated during proton transport" evidence="1">
    <location>
        <position position="52"/>
    </location>
</feature>
<sequence length="66" mass="7260">MNLTFLGLCIACMGVSVGEGLLMNGLFKSVARQPDMLSEFRSLMFLGVAFIEGTFFVTLVFSFIIK</sequence>
<accession>B1ICT5</accession>
<evidence type="ECO:0000255" key="1">
    <source>
        <dbReference type="HAMAP-Rule" id="MF_01396"/>
    </source>
</evidence>
<comment type="function">
    <text evidence="1">F(1)F(0) ATP synthase produces ATP from ADP in the presence of a proton or sodium gradient. F-type ATPases consist of two structural domains, F(1) containing the extramembraneous catalytic core and F(0) containing the membrane proton channel, linked together by a central stalk and a peripheral stalk. During catalysis, ATP synthesis in the catalytic domain of F(1) is coupled via a rotary mechanism of the central stalk subunits to proton translocation.</text>
</comment>
<comment type="function">
    <text evidence="1">Key component of the F(0) channel; it plays a direct role in translocation across the membrane. A homomeric c-ring of between 10-14 subunits forms the central stalk rotor element with the F(1) delta and epsilon subunits.</text>
</comment>
<comment type="subunit">
    <text evidence="1">F-type ATPases have 2 components, F(1) - the catalytic core - and F(0) - the membrane proton channel. F(1) has five subunits: alpha(3), beta(3), gamma(1), delta(1), epsilon(1). F(0) has three main subunits: a(1), b(2) and c(10-14). The alpha and beta chains form an alternating ring which encloses part of the gamma chain. F(1) is attached to F(0) by a central stalk formed by the gamma and epsilon chains, while a peripheral stalk is formed by the delta and b chains.</text>
</comment>
<comment type="subcellular location">
    <subcellularLocation>
        <location evidence="1">Cell membrane</location>
        <topology evidence="1">Multi-pass membrane protein</topology>
    </subcellularLocation>
</comment>
<comment type="similarity">
    <text evidence="1">Belongs to the ATPase C chain family.</text>
</comment>
<protein>
    <recommendedName>
        <fullName evidence="1">ATP synthase subunit c</fullName>
    </recommendedName>
    <alternativeName>
        <fullName evidence="1">ATP synthase F(0) sector subunit c</fullName>
    </alternativeName>
    <alternativeName>
        <fullName evidence="1">F-type ATPase subunit c</fullName>
        <shortName evidence="1">F-ATPase subunit c</shortName>
    </alternativeName>
    <alternativeName>
        <fullName evidence="1">Lipid-binding protein</fullName>
    </alternativeName>
</protein>
<proteinExistence type="inferred from homology"/>
<keyword id="KW-0066">ATP synthesis</keyword>
<keyword id="KW-1003">Cell membrane</keyword>
<keyword id="KW-0138">CF(0)</keyword>
<keyword id="KW-0375">Hydrogen ion transport</keyword>
<keyword id="KW-0406">Ion transport</keyword>
<keyword id="KW-0446">Lipid-binding</keyword>
<keyword id="KW-0472">Membrane</keyword>
<keyword id="KW-0812">Transmembrane</keyword>
<keyword id="KW-1133">Transmembrane helix</keyword>
<keyword id="KW-0813">Transport</keyword>